<evidence type="ECO:0000250" key="1"/>
<evidence type="ECO:0000305" key="2"/>
<name>HIS8_XYLFT</name>
<proteinExistence type="inferred from homology"/>
<sequence length="365" mass="39243">MNAQTHTVLDLVRQELRSFAGYSSARSVALTGDLWLNANESAWPNPADSHATMRRYPEPQPPKLRQMLAALYGCLPEQVLIGRGSDEGIDLLVRAVCEPRRDPVLVTPPVFGMYAVSAQLQNAPLIQVPLVDDAAGFHADVPAIITAAQTSRAKLVFLCSPSNPVGAAIPLQQIETILQTLAGTALVVVDEAYGEFSDVPSVVPLLARYPHLVVLRTLSKAHALAAVRIGSVIADAHLVAVLRRCQAPYPLPTPCVSLAEQGLSAAALHVTAQRVAEIRAERERLRAALACLSGVRRVYPSQGNFLLVRFDDAEAAFQALYAAGVVVRDQRAAPQLHDALRLTVGTPEQNTRLLAVLRDIQAVPA</sequence>
<comment type="catalytic activity">
    <reaction>
        <text>L-histidinol phosphate + 2-oxoglutarate = 3-(imidazol-4-yl)-2-oxopropyl phosphate + L-glutamate</text>
        <dbReference type="Rhea" id="RHEA:23744"/>
        <dbReference type="ChEBI" id="CHEBI:16810"/>
        <dbReference type="ChEBI" id="CHEBI:29985"/>
        <dbReference type="ChEBI" id="CHEBI:57766"/>
        <dbReference type="ChEBI" id="CHEBI:57980"/>
        <dbReference type="EC" id="2.6.1.9"/>
    </reaction>
</comment>
<comment type="cofactor">
    <cofactor evidence="1">
        <name>pyridoxal 5'-phosphate</name>
        <dbReference type="ChEBI" id="CHEBI:597326"/>
    </cofactor>
</comment>
<comment type="pathway">
    <text>Amino-acid biosynthesis; L-histidine biosynthesis; L-histidine from 5-phospho-alpha-D-ribose 1-diphosphate: step 7/9.</text>
</comment>
<comment type="subunit">
    <text evidence="1">Homodimer.</text>
</comment>
<comment type="similarity">
    <text evidence="2">Belongs to the class-II pyridoxal-phosphate-dependent aminotransferase family. Histidinol-phosphate aminotransferase subfamily.</text>
</comment>
<dbReference type="EC" id="2.6.1.9"/>
<dbReference type="EMBL" id="AE009442">
    <property type="protein sequence ID" value="AAO29115.1"/>
    <property type="molecule type" value="Genomic_DNA"/>
</dbReference>
<dbReference type="RefSeq" id="WP_004083408.1">
    <property type="nucleotide sequence ID" value="NC_004556.1"/>
</dbReference>
<dbReference type="SMR" id="Q87C30"/>
<dbReference type="KEGG" id="xft:PD_1266"/>
<dbReference type="HOGENOM" id="CLU_017584_3_1_6"/>
<dbReference type="UniPathway" id="UPA00031">
    <property type="reaction ID" value="UER00012"/>
</dbReference>
<dbReference type="Proteomes" id="UP000002516">
    <property type="component" value="Chromosome"/>
</dbReference>
<dbReference type="GO" id="GO:0004400">
    <property type="term" value="F:histidinol-phosphate transaminase activity"/>
    <property type="evidence" value="ECO:0007669"/>
    <property type="project" value="UniProtKB-UniRule"/>
</dbReference>
<dbReference type="GO" id="GO:0030170">
    <property type="term" value="F:pyridoxal phosphate binding"/>
    <property type="evidence" value="ECO:0007669"/>
    <property type="project" value="InterPro"/>
</dbReference>
<dbReference type="GO" id="GO:0000105">
    <property type="term" value="P:L-histidine biosynthetic process"/>
    <property type="evidence" value="ECO:0007669"/>
    <property type="project" value="UniProtKB-UniRule"/>
</dbReference>
<dbReference type="CDD" id="cd00609">
    <property type="entry name" value="AAT_like"/>
    <property type="match status" value="1"/>
</dbReference>
<dbReference type="Gene3D" id="3.90.1150.10">
    <property type="entry name" value="Aspartate Aminotransferase, domain 1"/>
    <property type="match status" value="1"/>
</dbReference>
<dbReference type="Gene3D" id="3.40.640.10">
    <property type="entry name" value="Type I PLP-dependent aspartate aminotransferase-like (Major domain)"/>
    <property type="match status" value="1"/>
</dbReference>
<dbReference type="HAMAP" id="MF_01023">
    <property type="entry name" value="HisC_aminotrans_2"/>
    <property type="match status" value="1"/>
</dbReference>
<dbReference type="InterPro" id="IPR004839">
    <property type="entry name" value="Aminotransferase_I/II_large"/>
</dbReference>
<dbReference type="InterPro" id="IPR005861">
    <property type="entry name" value="HisP_aminotrans"/>
</dbReference>
<dbReference type="InterPro" id="IPR015424">
    <property type="entry name" value="PyrdxlP-dep_Trfase"/>
</dbReference>
<dbReference type="InterPro" id="IPR015421">
    <property type="entry name" value="PyrdxlP-dep_Trfase_major"/>
</dbReference>
<dbReference type="InterPro" id="IPR015422">
    <property type="entry name" value="PyrdxlP-dep_Trfase_small"/>
</dbReference>
<dbReference type="NCBIfam" id="TIGR01141">
    <property type="entry name" value="hisC"/>
    <property type="match status" value="1"/>
</dbReference>
<dbReference type="PANTHER" id="PTHR42885:SF2">
    <property type="entry name" value="HISTIDINOL-PHOSPHATE AMINOTRANSFERASE"/>
    <property type="match status" value="1"/>
</dbReference>
<dbReference type="PANTHER" id="PTHR42885">
    <property type="entry name" value="HISTIDINOL-PHOSPHATE AMINOTRANSFERASE-RELATED"/>
    <property type="match status" value="1"/>
</dbReference>
<dbReference type="Pfam" id="PF00155">
    <property type="entry name" value="Aminotran_1_2"/>
    <property type="match status" value="1"/>
</dbReference>
<dbReference type="SUPFAM" id="SSF53383">
    <property type="entry name" value="PLP-dependent transferases"/>
    <property type="match status" value="1"/>
</dbReference>
<gene>
    <name type="primary">hisC</name>
    <name type="ordered locus">PD_1266</name>
</gene>
<accession>Q87C30</accession>
<feature type="chain" id="PRO_0000153486" description="Histidinol-phosphate aminotransferase">
    <location>
        <begin position="1"/>
        <end position="365"/>
    </location>
</feature>
<feature type="modified residue" description="N6-(pyridoxal phosphate)lysine" evidence="1">
    <location>
        <position position="220"/>
    </location>
</feature>
<organism>
    <name type="scientific">Xylella fastidiosa (strain Temecula1 / ATCC 700964)</name>
    <dbReference type="NCBI Taxonomy" id="183190"/>
    <lineage>
        <taxon>Bacteria</taxon>
        <taxon>Pseudomonadati</taxon>
        <taxon>Pseudomonadota</taxon>
        <taxon>Gammaproteobacteria</taxon>
        <taxon>Lysobacterales</taxon>
        <taxon>Lysobacteraceae</taxon>
        <taxon>Xylella</taxon>
    </lineage>
</organism>
<keyword id="KW-0028">Amino-acid biosynthesis</keyword>
<keyword id="KW-0032">Aminotransferase</keyword>
<keyword id="KW-0368">Histidine biosynthesis</keyword>
<keyword id="KW-0663">Pyridoxal phosphate</keyword>
<keyword id="KW-1185">Reference proteome</keyword>
<keyword id="KW-0808">Transferase</keyword>
<reference key="1">
    <citation type="journal article" date="2003" name="J. Bacteriol.">
        <title>Comparative analyses of the complete genome sequences of Pierce's disease and citrus variegated chlorosis strains of Xylella fastidiosa.</title>
        <authorList>
            <person name="Van Sluys M.A."/>
            <person name="de Oliveira M.C."/>
            <person name="Monteiro-Vitorello C.B."/>
            <person name="Miyaki C.Y."/>
            <person name="Furlan L.R."/>
            <person name="Camargo L.E.A."/>
            <person name="da Silva A.C.R."/>
            <person name="Moon D.H."/>
            <person name="Takita M.A."/>
            <person name="Lemos E.G.M."/>
            <person name="Machado M.A."/>
            <person name="Ferro M.I.T."/>
            <person name="da Silva F.R."/>
            <person name="Goldman M.H.S."/>
            <person name="Goldman G.H."/>
            <person name="Lemos M.V.F."/>
            <person name="El-Dorry H."/>
            <person name="Tsai S.M."/>
            <person name="Carrer H."/>
            <person name="Carraro D.M."/>
            <person name="de Oliveira R.C."/>
            <person name="Nunes L.R."/>
            <person name="Siqueira W.J."/>
            <person name="Coutinho L.L."/>
            <person name="Kimura E.T."/>
            <person name="Ferro E.S."/>
            <person name="Harakava R."/>
            <person name="Kuramae E.E."/>
            <person name="Marino C.L."/>
            <person name="Giglioti E."/>
            <person name="Abreu I.L."/>
            <person name="Alves L.M.C."/>
            <person name="do Amaral A.M."/>
            <person name="Baia G.S."/>
            <person name="Blanco S.R."/>
            <person name="Brito M.S."/>
            <person name="Cannavan F.S."/>
            <person name="Celestino A.V."/>
            <person name="da Cunha A.F."/>
            <person name="Fenille R.C."/>
            <person name="Ferro J.A."/>
            <person name="Formighieri E.F."/>
            <person name="Kishi L.T."/>
            <person name="Leoni S.G."/>
            <person name="Oliveira A.R."/>
            <person name="Rosa V.E. Jr."/>
            <person name="Sassaki F.T."/>
            <person name="Sena J.A.D."/>
            <person name="de Souza A.A."/>
            <person name="Truffi D."/>
            <person name="Tsukumo F."/>
            <person name="Yanai G.M."/>
            <person name="Zaros L.G."/>
            <person name="Civerolo E.L."/>
            <person name="Simpson A.J.G."/>
            <person name="Almeida N.F. Jr."/>
            <person name="Setubal J.C."/>
            <person name="Kitajima J.P."/>
        </authorList>
    </citation>
    <scope>NUCLEOTIDE SEQUENCE [LARGE SCALE GENOMIC DNA]</scope>
    <source>
        <strain>Temecula1 / ATCC 700964</strain>
    </source>
</reference>
<protein>
    <recommendedName>
        <fullName>Histidinol-phosphate aminotransferase</fullName>
        <ecNumber>2.6.1.9</ecNumber>
    </recommendedName>
    <alternativeName>
        <fullName>Imidazole acetol-phosphate transaminase</fullName>
    </alternativeName>
</protein>